<reference key="1">
    <citation type="journal article" date="2005" name="J. Bacteriol.">
        <title>Insights on evolution of virulence and resistance from the complete genome analysis of an early methicillin-resistant Staphylococcus aureus strain and a biofilm-producing methicillin-resistant Staphylococcus epidermidis strain.</title>
        <authorList>
            <person name="Gill S.R."/>
            <person name="Fouts D.E."/>
            <person name="Archer G.L."/>
            <person name="Mongodin E.F."/>
            <person name="DeBoy R.T."/>
            <person name="Ravel J."/>
            <person name="Paulsen I.T."/>
            <person name="Kolonay J.F."/>
            <person name="Brinkac L.M."/>
            <person name="Beanan M.J."/>
            <person name="Dodson R.J."/>
            <person name="Daugherty S.C."/>
            <person name="Madupu R."/>
            <person name="Angiuoli S.V."/>
            <person name="Durkin A.S."/>
            <person name="Haft D.H."/>
            <person name="Vamathevan J.J."/>
            <person name="Khouri H."/>
            <person name="Utterback T.R."/>
            <person name="Lee C."/>
            <person name="Dimitrov G."/>
            <person name="Jiang L."/>
            <person name="Qin H."/>
            <person name="Weidman J."/>
            <person name="Tran K."/>
            <person name="Kang K.H."/>
            <person name="Hance I.R."/>
            <person name="Nelson K.E."/>
            <person name="Fraser C.M."/>
        </authorList>
    </citation>
    <scope>NUCLEOTIDE SEQUENCE [LARGE SCALE GENOMIC DNA]</scope>
    <source>
        <strain>ATCC 35984 / DSM 28319 / BCRC 17069 / CCUG 31568 / BM 3577 / RP62A</strain>
    </source>
</reference>
<feature type="chain" id="PRO_0000248113" description="Nucleoside triphosphate/diphosphate phosphatase">
    <location>
        <begin position="1"/>
        <end position="180"/>
    </location>
</feature>
<feature type="active site" description="Proton donor" evidence="1">
    <location>
        <position position="26"/>
    </location>
</feature>
<feature type="binding site" evidence="1">
    <location>
        <position position="90"/>
    </location>
    <ligand>
        <name>Mg(2+)</name>
        <dbReference type="ChEBI" id="CHEBI:18420"/>
        <label>1</label>
    </ligand>
</feature>
<feature type="binding site" evidence="1">
    <location>
        <position position="106"/>
    </location>
    <ligand>
        <name>Mg(2+)</name>
        <dbReference type="ChEBI" id="CHEBI:18420"/>
        <label>1</label>
    </ligand>
</feature>
<feature type="binding site" evidence="1">
    <location>
        <position position="108"/>
    </location>
    <ligand>
        <name>Mg(2+)</name>
        <dbReference type="ChEBI" id="CHEBI:18420"/>
        <label>2</label>
    </ligand>
</feature>
<feature type="binding site" evidence="1">
    <location>
        <position position="110"/>
    </location>
    <ligand>
        <name>Mg(2+)</name>
        <dbReference type="ChEBI" id="CHEBI:18420"/>
        <label>1</label>
    </ligand>
</feature>
<feature type="binding site" evidence="1">
    <location>
        <position position="110"/>
    </location>
    <ligand>
        <name>Mg(2+)</name>
        <dbReference type="ChEBI" id="CHEBI:18420"/>
        <label>2</label>
    </ligand>
</feature>
<feature type="binding site" evidence="1">
    <location>
        <position position="123"/>
    </location>
    <ligand>
        <name>Mg(2+)</name>
        <dbReference type="ChEBI" id="CHEBI:18420"/>
        <label>2</label>
    </ligand>
</feature>
<feature type="binding site" evidence="1">
    <location>
        <position position="126"/>
    </location>
    <ligand>
        <name>Mg(2+)</name>
        <dbReference type="ChEBI" id="CHEBI:18420"/>
        <label>2</label>
    </ligand>
</feature>
<gene>
    <name type="ordered locus">SERP1405</name>
</gene>
<dbReference type="EC" id="3.6.1.15" evidence="1"/>
<dbReference type="EC" id="3.6.1.6" evidence="1"/>
<dbReference type="EMBL" id="CP000029">
    <property type="protein sequence ID" value="AAW54754.1"/>
    <property type="molecule type" value="Genomic_DNA"/>
</dbReference>
<dbReference type="RefSeq" id="WP_001830384.1">
    <property type="nucleotide sequence ID" value="NC_002976.3"/>
</dbReference>
<dbReference type="SMR" id="Q5HN67"/>
<dbReference type="STRING" id="176279.SERP1405"/>
<dbReference type="KEGG" id="ser:SERP1405"/>
<dbReference type="eggNOG" id="COG3557">
    <property type="taxonomic scope" value="Bacteria"/>
</dbReference>
<dbReference type="HOGENOM" id="CLU_109787_1_0_9"/>
<dbReference type="Proteomes" id="UP000000531">
    <property type="component" value="Chromosome"/>
</dbReference>
<dbReference type="GO" id="GO:0000287">
    <property type="term" value="F:magnesium ion binding"/>
    <property type="evidence" value="ECO:0007669"/>
    <property type="project" value="UniProtKB-UniRule"/>
</dbReference>
<dbReference type="GO" id="GO:0017110">
    <property type="term" value="F:nucleoside diphosphate phosphatase activity"/>
    <property type="evidence" value="ECO:0007669"/>
    <property type="project" value="UniProtKB-UniRule"/>
</dbReference>
<dbReference type="GO" id="GO:0017111">
    <property type="term" value="F:ribonucleoside triphosphate phosphatase activity"/>
    <property type="evidence" value="ECO:0007669"/>
    <property type="project" value="UniProtKB-UniRule"/>
</dbReference>
<dbReference type="Gene3D" id="2.40.380.10">
    <property type="entry name" value="FomD-like"/>
    <property type="match status" value="1"/>
</dbReference>
<dbReference type="HAMAP" id="MF_01568">
    <property type="entry name" value="Ntdp"/>
    <property type="match status" value="1"/>
</dbReference>
<dbReference type="InterPro" id="IPR007295">
    <property type="entry name" value="DUF402"/>
</dbReference>
<dbReference type="InterPro" id="IPR035930">
    <property type="entry name" value="FomD-like_sf"/>
</dbReference>
<dbReference type="InterPro" id="IPR050212">
    <property type="entry name" value="Ntdp-like"/>
</dbReference>
<dbReference type="InterPro" id="IPR016882">
    <property type="entry name" value="SA1684"/>
</dbReference>
<dbReference type="NCBIfam" id="NF010183">
    <property type="entry name" value="PRK13662.1"/>
    <property type="match status" value="1"/>
</dbReference>
<dbReference type="PANTHER" id="PTHR39159">
    <property type="match status" value="1"/>
</dbReference>
<dbReference type="PANTHER" id="PTHR39159:SF1">
    <property type="entry name" value="UPF0374 PROTEIN YGAC"/>
    <property type="match status" value="1"/>
</dbReference>
<dbReference type="Pfam" id="PF04167">
    <property type="entry name" value="DUF402"/>
    <property type="match status" value="1"/>
</dbReference>
<dbReference type="PIRSF" id="PIRSF028345">
    <property type="entry name" value="UCP028345"/>
    <property type="match status" value="1"/>
</dbReference>
<dbReference type="SUPFAM" id="SSF159234">
    <property type="entry name" value="FomD-like"/>
    <property type="match status" value="1"/>
</dbReference>
<accession>Q5HN67</accession>
<organism>
    <name type="scientific">Staphylococcus epidermidis (strain ATCC 35984 / DSM 28319 / BCRC 17069 / CCUG 31568 / BM 3577 / RP62A)</name>
    <dbReference type="NCBI Taxonomy" id="176279"/>
    <lineage>
        <taxon>Bacteria</taxon>
        <taxon>Bacillati</taxon>
        <taxon>Bacillota</taxon>
        <taxon>Bacilli</taxon>
        <taxon>Bacillales</taxon>
        <taxon>Staphylococcaceae</taxon>
        <taxon>Staphylococcus</taxon>
    </lineage>
</organism>
<protein>
    <recommendedName>
        <fullName evidence="1">Nucleoside triphosphate/diphosphate phosphatase</fullName>
        <ecNumber evidence="1">3.6.1.15</ecNumber>
        <ecNumber evidence="1">3.6.1.6</ecNumber>
    </recommendedName>
</protein>
<sequence>MVKESIPKEGENIKIQSYKHDGNIHRVWSETTILKGTEHVIIGGNDHTLVTESDGRTWITREPAIVYFHSEYWFNVICMFREDGIYYYCNLSSPFACDEEALKYIDYDLDIKVYPNGKYHLLDEDEYEQHMNQMNYPHDIDIILRRNVDILQQWIEQKKGPFAPDFIKVWKERYKKIRDY</sequence>
<comment type="function">
    <text evidence="1">Has nucleoside phosphatase activity towards nucleoside triphosphates and nucleoside diphosphates.</text>
</comment>
<comment type="catalytic activity">
    <reaction evidence="1">
        <text>a ribonucleoside 5'-triphosphate + H2O = a ribonucleoside 5'-diphosphate + phosphate + H(+)</text>
        <dbReference type="Rhea" id="RHEA:23680"/>
        <dbReference type="ChEBI" id="CHEBI:15377"/>
        <dbReference type="ChEBI" id="CHEBI:15378"/>
        <dbReference type="ChEBI" id="CHEBI:43474"/>
        <dbReference type="ChEBI" id="CHEBI:57930"/>
        <dbReference type="ChEBI" id="CHEBI:61557"/>
        <dbReference type="EC" id="3.6.1.15"/>
    </reaction>
</comment>
<comment type="catalytic activity">
    <reaction evidence="1">
        <text>a ribonucleoside 5'-diphosphate + H2O = a ribonucleoside 5'-phosphate + phosphate + H(+)</text>
        <dbReference type="Rhea" id="RHEA:36799"/>
        <dbReference type="ChEBI" id="CHEBI:15377"/>
        <dbReference type="ChEBI" id="CHEBI:15378"/>
        <dbReference type="ChEBI" id="CHEBI:43474"/>
        <dbReference type="ChEBI" id="CHEBI:57930"/>
        <dbReference type="ChEBI" id="CHEBI:58043"/>
        <dbReference type="EC" id="3.6.1.6"/>
    </reaction>
</comment>
<comment type="cofactor">
    <cofactor evidence="1">
        <name>Mg(2+)</name>
        <dbReference type="ChEBI" id="CHEBI:18420"/>
    </cofactor>
</comment>
<comment type="similarity">
    <text evidence="1">Belongs to the Ntdp family.</text>
</comment>
<keyword id="KW-0378">Hydrolase</keyword>
<keyword id="KW-0460">Magnesium</keyword>
<keyword id="KW-0479">Metal-binding</keyword>
<keyword id="KW-1185">Reference proteome</keyword>
<evidence type="ECO:0000255" key="1">
    <source>
        <dbReference type="HAMAP-Rule" id="MF_01568"/>
    </source>
</evidence>
<proteinExistence type="inferred from homology"/>
<name>NTDP_STAEQ</name>